<name>NUSB_PARXL</name>
<accession>Q13V35</accession>
<reference key="1">
    <citation type="journal article" date="2006" name="Proc. Natl. Acad. Sci. U.S.A.">
        <title>Burkholderia xenovorans LB400 harbors a multi-replicon, 9.73-Mbp genome shaped for versatility.</title>
        <authorList>
            <person name="Chain P.S.G."/>
            <person name="Denef V.J."/>
            <person name="Konstantinidis K.T."/>
            <person name="Vergez L.M."/>
            <person name="Agullo L."/>
            <person name="Reyes V.L."/>
            <person name="Hauser L."/>
            <person name="Cordova M."/>
            <person name="Gomez L."/>
            <person name="Gonzalez M."/>
            <person name="Land M."/>
            <person name="Lao V."/>
            <person name="Larimer F."/>
            <person name="LiPuma J.J."/>
            <person name="Mahenthiralingam E."/>
            <person name="Malfatti S.A."/>
            <person name="Marx C.J."/>
            <person name="Parnell J.J."/>
            <person name="Ramette A."/>
            <person name="Richardson P."/>
            <person name="Seeger M."/>
            <person name="Smith D."/>
            <person name="Spilker T."/>
            <person name="Sul W.J."/>
            <person name="Tsoi T.V."/>
            <person name="Ulrich L.E."/>
            <person name="Zhulin I.B."/>
            <person name="Tiedje J.M."/>
        </authorList>
    </citation>
    <scope>NUCLEOTIDE SEQUENCE [LARGE SCALE GENOMIC DNA]</scope>
    <source>
        <strain>LB400</strain>
    </source>
</reference>
<evidence type="ECO:0000255" key="1">
    <source>
        <dbReference type="HAMAP-Rule" id="MF_00073"/>
    </source>
</evidence>
<feature type="chain" id="PRO_0000265500" description="Transcription antitermination protein NusB">
    <location>
        <begin position="1"/>
        <end position="144"/>
    </location>
</feature>
<sequence>MKSARRRSRELATQGLYQWLLSGSPGGEIDAQLRGAQGFDKADHEHLDAVLHGVIRDSEALSAAIAPCLDRPIEQLSPVERAVLLVAAFELKNHLDIPYRVVINEAVELAKTFGGADGYKYVNGVLDKLSAQLREDETQAARKR</sequence>
<proteinExistence type="inferred from homology"/>
<protein>
    <recommendedName>
        <fullName evidence="1">Transcription antitermination protein NusB</fullName>
    </recommendedName>
    <alternativeName>
        <fullName evidence="1">Antitermination factor NusB</fullName>
    </alternativeName>
</protein>
<dbReference type="EMBL" id="CP000270">
    <property type="protein sequence ID" value="ABE32054.1"/>
    <property type="molecule type" value="Genomic_DNA"/>
</dbReference>
<dbReference type="RefSeq" id="WP_011489561.1">
    <property type="nucleotide sequence ID" value="NC_007951.1"/>
</dbReference>
<dbReference type="SMR" id="Q13V35"/>
<dbReference type="STRING" id="266265.Bxe_A0891"/>
<dbReference type="KEGG" id="bxb:DR64_3052"/>
<dbReference type="KEGG" id="bxe:Bxe_A0891"/>
<dbReference type="PATRIC" id="fig|266265.5.peg.3694"/>
<dbReference type="eggNOG" id="COG0781">
    <property type="taxonomic scope" value="Bacteria"/>
</dbReference>
<dbReference type="OrthoDB" id="9789556at2"/>
<dbReference type="Proteomes" id="UP000001817">
    <property type="component" value="Chromosome 1"/>
</dbReference>
<dbReference type="GO" id="GO:0005829">
    <property type="term" value="C:cytosol"/>
    <property type="evidence" value="ECO:0007669"/>
    <property type="project" value="TreeGrafter"/>
</dbReference>
<dbReference type="GO" id="GO:0003723">
    <property type="term" value="F:RNA binding"/>
    <property type="evidence" value="ECO:0007669"/>
    <property type="project" value="UniProtKB-UniRule"/>
</dbReference>
<dbReference type="GO" id="GO:0006353">
    <property type="term" value="P:DNA-templated transcription termination"/>
    <property type="evidence" value="ECO:0007669"/>
    <property type="project" value="UniProtKB-UniRule"/>
</dbReference>
<dbReference type="GO" id="GO:0031564">
    <property type="term" value="P:transcription antitermination"/>
    <property type="evidence" value="ECO:0007669"/>
    <property type="project" value="UniProtKB-KW"/>
</dbReference>
<dbReference type="Gene3D" id="1.10.940.10">
    <property type="entry name" value="NusB-like"/>
    <property type="match status" value="1"/>
</dbReference>
<dbReference type="HAMAP" id="MF_00073">
    <property type="entry name" value="NusB"/>
    <property type="match status" value="1"/>
</dbReference>
<dbReference type="InterPro" id="IPR035926">
    <property type="entry name" value="NusB-like_sf"/>
</dbReference>
<dbReference type="InterPro" id="IPR011605">
    <property type="entry name" value="NusB_fam"/>
</dbReference>
<dbReference type="InterPro" id="IPR006027">
    <property type="entry name" value="NusB_RsmB_TIM44"/>
</dbReference>
<dbReference type="NCBIfam" id="TIGR01951">
    <property type="entry name" value="nusB"/>
    <property type="match status" value="1"/>
</dbReference>
<dbReference type="PANTHER" id="PTHR11078:SF3">
    <property type="entry name" value="ANTITERMINATION NUSB DOMAIN-CONTAINING PROTEIN"/>
    <property type="match status" value="1"/>
</dbReference>
<dbReference type="PANTHER" id="PTHR11078">
    <property type="entry name" value="N UTILIZATION SUBSTANCE PROTEIN B-RELATED"/>
    <property type="match status" value="1"/>
</dbReference>
<dbReference type="Pfam" id="PF01029">
    <property type="entry name" value="NusB"/>
    <property type="match status" value="1"/>
</dbReference>
<dbReference type="SUPFAM" id="SSF48013">
    <property type="entry name" value="NusB-like"/>
    <property type="match status" value="1"/>
</dbReference>
<organism>
    <name type="scientific">Paraburkholderia xenovorans (strain LB400)</name>
    <dbReference type="NCBI Taxonomy" id="266265"/>
    <lineage>
        <taxon>Bacteria</taxon>
        <taxon>Pseudomonadati</taxon>
        <taxon>Pseudomonadota</taxon>
        <taxon>Betaproteobacteria</taxon>
        <taxon>Burkholderiales</taxon>
        <taxon>Burkholderiaceae</taxon>
        <taxon>Paraburkholderia</taxon>
    </lineage>
</organism>
<comment type="function">
    <text evidence="1">Involved in transcription antitermination. Required for transcription of ribosomal RNA (rRNA) genes. Binds specifically to the boxA antiterminator sequence of the ribosomal RNA (rrn) operons.</text>
</comment>
<comment type="similarity">
    <text evidence="1">Belongs to the NusB family.</text>
</comment>
<gene>
    <name evidence="1" type="primary">nusB</name>
    <name type="ordered locus">Bxeno_A3516</name>
    <name type="ORF">Bxe_A0891</name>
</gene>
<keyword id="KW-1185">Reference proteome</keyword>
<keyword id="KW-0694">RNA-binding</keyword>
<keyword id="KW-0804">Transcription</keyword>
<keyword id="KW-0889">Transcription antitermination</keyword>
<keyword id="KW-0805">Transcription regulation</keyword>